<sequence length="250" mass="28556">MAVTKLVLVRHGESQWNKENRFTGWYDVDLSEKGVSEAKAAGKLLKEEGYSFDFAYTSVLKRAIHTLWNVLDELDQAWLPVEKSWKLNERHYGALQGLNKAETAEKYGDEQVKQWRRGFAVTPPELTKDDERYPGHDPRYAKLSEKELPLTESLALTIDRVIPYWNETILPRMKSGERVIIAAHGNSLRALVKYLDNMSEEEILELNIPTGVPLVYEFDENFKPLKRYYLGNADEIAAKAAAVANQGKAK</sequence>
<name>GPMA_ECOK1</name>
<gene>
    <name evidence="1" type="primary">gpmA</name>
    <name type="ordered locus">Ecok1_06440</name>
    <name type="ORF">APECO1_1333</name>
</gene>
<feature type="chain" id="PRO_1000064056" description="2,3-bisphosphoglycerate-dependent phosphoglycerate mutase">
    <location>
        <begin position="1"/>
        <end position="250"/>
    </location>
</feature>
<feature type="active site" description="Tele-phosphohistidine intermediate" evidence="1">
    <location>
        <position position="11"/>
    </location>
</feature>
<feature type="active site" description="Proton donor/acceptor" evidence="1">
    <location>
        <position position="89"/>
    </location>
</feature>
<feature type="binding site" evidence="1">
    <location>
        <begin position="10"/>
        <end position="17"/>
    </location>
    <ligand>
        <name>substrate</name>
    </ligand>
</feature>
<feature type="binding site" evidence="1">
    <location>
        <begin position="23"/>
        <end position="24"/>
    </location>
    <ligand>
        <name>substrate</name>
    </ligand>
</feature>
<feature type="binding site" evidence="1">
    <location>
        <position position="62"/>
    </location>
    <ligand>
        <name>substrate</name>
    </ligand>
</feature>
<feature type="binding site" evidence="1">
    <location>
        <begin position="89"/>
        <end position="92"/>
    </location>
    <ligand>
        <name>substrate</name>
    </ligand>
</feature>
<feature type="binding site" evidence="1">
    <location>
        <position position="100"/>
    </location>
    <ligand>
        <name>substrate</name>
    </ligand>
</feature>
<feature type="binding site" evidence="1">
    <location>
        <begin position="116"/>
        <end position="117"/>
    </location>
    <ligand>
        <name>substrate</name>
    </ligand>
</feature>
<feature type="binding site" evidence="1">
    <location>
        <begin position="185"/>
        <end position="186"/>
    </location>
    <ligand>
        <name>substrate</name>
    </ligand>
</feature>
<feature type="site" description="Transition state stabilizer" evidence="1">
    <location>
        <position position="184"/>
    </location>
</feature>
<comment type="function">
    <text evidence="1">Catalyzes the interconversion of 2-phosphoglycerate and 3-phosphoglycerate.</text>
</comment>
<comment type="catalytic activity">
    <reaction evidence="1">
        <text>(2R)-2-phosphoglycerate = (2R)-3-phosphoglycerate</text>
        <dbReference type="Rhea" id="RHEA:15901"/>
        <dbReference type="ChEBI" id="CHEBI:58272"/>
        <dbReference type="ChEBI" id="CHEBI:58289"/>
        <dbReference type="EC" id="5.4.2.11"/>
    </reaction>
</comment>
<comment type="pathway">
    <text evidence="1">Carbohydrate degradation; glycolysis; pyruvate from D-glyceraldehyde 3-phosphate: step 3/5.</text>
</comment>
<comment type="subunit">
    <text evidence="1">Homodimer.</text>
</comment>
<comment type="similarity">
    <text evidence="1">Belongs to the phosphoglycerate mutase family. BPG-dependent PGAM subfamily.</text>
</comment>
<dbReference type="EC" id="5.4.2.11" evidence="1"/>
<dbReference type="EMBL" id="CP000468">
    <property type="protein sequence ID" value="ABJ00138.1"/>
    <property type="molecule type" value="Genomic_DNA"/>
</dbReference>
<dbReference type="RefSeq" id="WP_001295305.1">
    <property type="nucleotide sequence ID" value="NZ_CADILS010000026.1"/>
</dbReference>
<dbReference type="SMR" id="A1A8Z8"/>
<dbReference type="GeneID" id="93776726"/>
<dbReference type="KEGG" id="ecv:APECO1_1333"/>
<dbReference type="HOGENOM" id="CLU_033323_1_1_6"/>
<dbReference type="UniPathway" id="UPA00109">
    <property type="reaction ID" value="UER00186"/>
</dbReference>
<dbReference type="Proteomes" id="UP000008216">
    <property type="component" value="Chromosome"/>
</dbReference>
<dbReference type="GO" id="GO:0004619">
    <property type="term" value="F:phosphoglycerate mutase activity"/>
    <property type="evidence" value="ECO:0007669"/>
    <property type="project" value="UniProtKB-EC"/>
</dbReference>
<dbReference type="GO" id="GO:0006094">
    <property type="term" value="P:gluconeogenesis"/>
    <property type="evidence" value="ECO:0007669"/>
    <property type="project" value="UniProtKB-UniRule"/>
</dbReference>
<dbReference type="GO" id="GO:0006096">
    <property type="term" value="P:glycolytic process"/>
    <property type="evidence" value="ECO:0007669"/>
    <property type="project" value="UniProtKB-UniRule"/>
</dbReference>
<dbReference type="CDD" id="cd07067">
    <property type="entry name" value="HP_PGM_like"/>
    <property type="match status" value="1"/>
</dbReference>
<dbReference type="FunFam" id="3.40.50.1240:FF:000003">
    <property type="entry name" value="2,3-bisphosphoglycerate-dependent phosphoglycerate mutase"/>
    <property type="match status" value="1"/>
</dbReference>
<dbReference type="Gene3D" id="3.40.50.1240">
    <property type="entry name" value="Phosphoglycerate mutase-like"/>
    <property type="match status" value="1"/>
</dbReference>
<dbReference type="HAMAP" id="MF_01039">
    <property type="entry name" value="PGAM_GpmA"/>
    <property type="match status" value="1"/>
</dbReference>
<dbReference type="InterPro" id="IPR013078">
    <property type="entry name" value="His_Pase_superF_clade-1"/>
</dbReference>
<dbReference type="InterPro" id="IPR029033">
    <property type="entry name" value="His_PPase_superfam"/>
</dbReference>
<dbReference type="InterPro" id="IPR001345">
    <property type="entry name" value="PG/BPGM_mutase_AS"/>
</dbReference>
<dbReference type="InterPro" id="IPR005952">
    <property type="entry name" value="Phosphogly_mut1"/>
</dbReference>
<dbReference type="NCBIfam" id="TIGR01258">
    <property type="entry name" value="pgm_1"/>
    <property type="match status" value="1"/>
</dbReference>
<dbReference type="NCBIfam" id="NF010713">
    <property type="entry name" value="PRK14115.1"/>
    <property type="match status" value="1"/>
</dbReference>
<dbReference type="PANTHER" id="PTHR11931">
    <property type="entry name" value="PHOSPHOGLYCERATE MUTASE"/>
    <property type="match status" value="1"/>
</dbReference>
<dbReference type="Pfam" id="PF00300">
    <property type="entry name" value="His_Phos_1"/>
    <property type="match status" value="1"/>
</dbReference>
<dbReference type="PIRSF" id="PIRSF000709">
    <property type="entry name" value="6PFK_2-Ptase"/>
    <property type="match status" value="1"/>
</dbReference>
<dbReference type="SMART" id="SM00855">
    <property type="entry name" value="PGAM"/>
    <property type="match status" value="1"/>
</dbReference>
<dbReference type="SUPFAM" id="SSF53254">
    <property type="entry name" value="Phosphoglycerate mutase-like"/>
    <property type="match status" value="1"/>
</dbReference>
<dbReference type="PROSITE" id="PS00175">
    <property type="entry name" value="PG_MUTASE"/>
    <property type="match status" value="1"/>
</dbReference>
<accession>A1A8Z8</accession>
<protein>
    <recommendedName>
        <fullName evidence="1">2,3-bisphosphoglycerate-dependent phosphoglycerate mutase</fullName>
        <shortName evidence="1">BPG-dependent PGAM</shortName>
        <shortName evidence="1">PGAM</shortName>
        <shortName evidence="1">Phosphoglyceromutase</shortName>
        <shortName evidence="1">dPGM</shortName>
        <ecNumber evidence="1">5.4.2.11</ecNumber>
    </recommendedName>
</protein>
<keyword id="KW-0312">Gluconeogenesis</keyword>
<keyword id="KW-0324">Glycolysis</keyword>
<keyword id="KW-0413">Isomerase</keyword>
<keyword id="KW-1185">Reference proteome</keyword>
<proteinExistence type="inferred from homology"/>
<reference key="1">
    <citation type="journal article" date="2007" name="J. Bacteriol.">
        <title>The genome sequence of avian pathogenic Escherichia coli strain O1:K1:H7 shares strong similarities with human extraintestinal pathogenic E. coli genomes.</title>
        <authorList>
            <person name="Johnson T.J."/>
            <person name="Kariyawasam S."/>
            <person name="Wannemuehler Y."/>
            <person name="Mangiamele P."/>
            <person name="Johnson S.J."/>
            <person name="Doetkott C."/>
            <person name="Skyberg J.A."/>
            <person name="Lynne A.M."/>
            <person name="Johnson J.R."/>
            <person name="Nolan L.K."/>
        </authorList>
    </citation>
    <scope>NUCLEOTIDE SEQUENCE [LARGE SCALE GENOMIC DNA]</scope>
</reference>
<evidence type="ECO:0000255" key="1">
    <source>
        <dbReference type="HAMAP-Rule" id="MF_01039"/>
    </source>
</evidence>
<organism>
    <name type="scientific">Escherichia coli O1:K1 / APEC</name>
    <dbReference type="NCBI Taxonomy" id="405955"/>
    <lineage>
        <taxon>Bacteria</taxon>
        <taxon>Pseudomonadati</taxon>
        <taxon>Pseudomonadota</taxon>
        <taxon>Gammaproteobacteria</taxon>
        <taxon>Enterobacterales</taxon>
        <taxon>Enterobacteriaceae</taxon>
        <taxon>Escherichia</taxon>
    </lineage>
</organism>